<reference key="1">
    <citation type="journal article" date="2001" name="Plant Mol. Biol.">
        <title>Expression and evolution of functionally distinct haemoglobin genes in plants.</title>
        <authorList>
            <person name="Hunt P.W."/>
            <person name="Watts R.A."/>
            <person name="Trevaskis B."/>
            <person name="Llewellyn D.J."/>
            <person name="Burnell J."/>
            <person name="Dennis E.S."/>
            <person name="Peacock W.J."/>
        </authorList>
    </citation>
    <scope>NUCLEOTIDE SEQUENCE [GENOMIC DNA]</scope>
</reference>
<comment type="function">
    <text evidence="2 4">Phytoglobin that reduces nitrite to nitric oxide (NO) under anoxic conditions (e.g. during flooding or in waterlogged soil) (By similarity). May not function as an oxygen storage or transport protein (By similarity). Has an unusually high affinity for O(2) through an hexacoordinate heme iron because of a very low dissociation constant (By similarity).</text>
</comment>
<comment type="catalytic activity">
    <reaction evidence="2">
        <text>Fe(III)-heme b-[protein] + nitric oxide + H2O = Fe(II)-heme b-[protein] + nitrite + 2 H(+)</text>
        <dbReference type="Rhea" id="RHEA:77711"/>
        <dbReference type="Rhea" id="RHEA-COMP:18975"/>
        <dbReference type="Rhea" id="RHEA-COMP:18976"/>
        <dbReference type="ChEBI" id="CHEBI:15377"/>
        <dbReference type="ChEBI" id="CHEBI:15378"/>
        <dbReference type="ChEBI" id="CHEBI:16301"/>
        <dbReference type="ChEBI" id="CHEBI:16480"/>
        <dbReference type="ChEBI" id="CHEBI:55376"/>
        <dbReference type="ChEBI" id="CHEBI:60344"/>
    </reaction>
    <physiologicalReaction direction="right-to-left" evidence="2">
        <dbReference type="Rhea" id="RHEA:77713"/>
    </physiologicalReaction>
</comment>
<comment type="cofactor">
    <cofactor evidence="3">
        <name>heme b</name>
        <dbReference type="ChEBI" id="CHEBI:60344"/>
    </cofactor>
    <text evidence="3">Binds 1 heme group per subunit.</text>
</comment>
<comment type="subunit">
    <text evidence="2">Homodimer.</text>
</comment>
<comment type="subcellular location">
    <subcellularLocation>
        <location evidence="1">Cytoplasm</location>
    </subcellularLocation>
    <subcellularLocation>
        <location evidence="1">Nucleus</location>
    </subcellularLocation>
</comment>
<comment type="similarity">
    <text evidence="7">Belongs to the plant globin family.</text>
</comment>
<name>HBL2_BRANA</name>
<accession>Q941Q2</accession>
<keyword id="KW-0963">Cytoplasm</keyword>
<keyword id="KW-0349">Heme</keyword>
<keyword id="KW-0408">Iron</keyword>
<keyword id="KW-0479">Metal-binding</keyword>
<keyword id="KW-0539">Nucleus</keyword>
<keyword id="KW-0560">Oxidoreductase</keyword>
<organism>
    <name type="scientific">Brassica napus</name>
    <name type="common">Rape</name>
    <dbReference type="NCBI Taxonomy" id="3708"/>
    <lineage>
        <taxon>Eukaryota</taxon>
        <taxon>Viridiplantae</taxon>
        <taxon>Streptophyta</taxon>
        <taxon>Embryophyta</taxon>
        <taxon>Tracheophyta</taxon>
        <taxon>Spermatophyta</taxon>
        <taxon>Magnoliopsida</taxon>
        <taxon>eudicotyledons</taxon>
        <taxon>Gunneridae</taxon>
        <taxon>Pentapetalae</taxon>
        <taxon>rosids</taxon>
        <taxon>malvids</taxon>
        <taxon>Brassicales</taxon>
        <taxon>Brassicaceae</taxon>
        <taxon>Brassiceae</taxon>
        <taxon>Brassica</taxon>
    </lineage>
</organism>
<feature type="chain" id="PRO_0000193013" description="Anaerobic nitrite reductase HB2">
    <location>
        <begin position="1"/>
        <end position="161"/>
    </location>
</feature>
<feature type="domain" description="Globin" evidence="5">
    <location>
        <begin position="5"/>
        <end position="154"/>
    </location>
</feature>
<feature type="short sequence motif" description="Homodimerization" evidence="2">
    <location>
        <begin position="38"/>
        <end position="42"/>
    </location>
</feature>
<feature type="short sequence motif" description="Homodimerization" evidence="2">
    <location>
        <begin position="108"/>
        <end position="120"/>
    </location>
</feature>
<feature type="binding site" evidence="3">
    <location>
        <position position="48"/>
    </location>
    <ligand>
        <name>heme b</name>
        <dbReference type="ChEBI" id="CHEBI:60344"/>
    </ligand>
</feature>
<feature type="binding site" evidence="2">
    <location>
        <position position="62"/>
    </location>
    <ligand>
        <name>heme b</name>
        <dbReference type="ChEBI" id="CHEBI:60344"/>
    </ligand>
</feature>
<feature type="binding site" description="distal binding residue" evidence="5">
    <location>
        <position position="66"/>
    </location>
    <ligand>
        <name>heme b</name>
        <dbReference type="ChEBI" id="CHEBI:60344"/>
    </ligand>
    <ligandPart>
        <name>Fe</name>
        <dbReference type="ChEBI" id="CHEBI:18248"/>
    </ligandPart>
</feature>
<feature type="binding site" description="proximal binding residue" evidence="5">
    <location>
        <position position="101"/>
    </location>
    <ligand>
        <name>heme b</name>
        <dbReference type="ChEBI" id="CHEBI:60344"/>
    </ligand>
    <ligandPart>
        <name>Fe</name>
        <dbReference type="ChEBI" id="CHEBI:18248"/>
    </ligandPart>
</feature>
<dbReference type="EC" id="1.7.2.-" evidence="2"/>
<dbReference type="EMBL" id="AY026337">
    <property type="protein sequence ID" value="AAK07741.1"/>
    <property type="molecule type" value="Genomic_DNA"/>
</dbReference>
<dbReference type="SMR" id="Q941Q2"/>
<dbReference type="GO" id="GO:0005737">
    <property type="term" value="C:cytoplasm"/>
    <property type="evidence" value="ECO:0007669"/>
    <property type="project" value="UniProtKB-SubCell"/>
</dbReference>
<dbReference type="GO" id="GO:0005634">
    <property type="term" value="C:nucleus"/>
    <property type="evidence" value="ECO:0007669"/>
    <property type="project" value="UniProtKB-SubCell"/>
</dbReference>
<dbReference type="GO" id="GO:0020037">
    <property type="term" value="F:heme binding"/>
    <property type="evidence" value="ECO:0007669"/>
    <property type="project" value="InterPro"/>
</dbReference>
<dbReference type="GO" id="GO:0046872">
    <property type="term" value="F:metal ion binding"/>
    <property type="evidence" value="ECO:0007669"/>
    <property type="project" value="UniProtKB-KW"/>
</dbReference>
<dbReference type="GO" id="GO:0016491">
    <property type="term" value="F:oxidoreductase activity"/>
    <property type="evidence" value="ECO:0007669"/>
    <property type="project" value="UniProtKB-KW"/>
</dbReference>
<dbReference type="GO" id="GO:0019825">
    <property type="term" value="F:oxygen binding"/>
    <property type="evidence" value="ECO:0007669"/>
    <property type="project" value="InterPro"/>
</dbReference>
<dbReference type="CDD" id="cd08923">
    <property type="entry name" value="class1-2_nsHbs_Lbs"/>
    <property type="match status" value="1"/>
</dbReference>
<dbReference type="FunFam" id="1.10.490.10:FF:000008">
    <property type="entry name" value="non-symbiotic hemoglobin 1"/>
    <property type="match status" value="1"/>
</dbReference>
<dbReference type="Gene3D" id="1.10.490.10">
    <property type="entry name" value="Globins"/>
    <property type="match status" value="1"/>
</dbReference>
<dbReference type="InterPro" id="IPR000971">
    <property type="entry name" value="Globin"/>
</dbReference>
<dbReference type="InterPro" id="IPR009050">
    <property type="entry name" value="Globin-like_sf"/>
</dbReference>
<dbReference type="InterPro" id="IPR012292">
    <property type="entry name" value="Globin/Proto"/>
</dbReference>
<dbReference type="InterPro" id="IPR001032">
    <property type="entry name" value="Leghaemoglobin-like"/>
</dbReference>
<dbReference type="InterPro" id="IPR019824">
    <property type="entry name" value="Leghaemoglobin_Fe_BS"/>
</dbReference>
<dbReference type="PANTHER" id="PTHR22924">
    <property type="entry name" value="LEGHEMOGLOBIN-RELATED"/>
    <property type="match status" value="1"/>
</dbReference>
<dbReference type="PANTHER" id="PTHR22924:SF92">
    <property type="entry name" value="NON-SYMBIOTIC HEMOGLOBIN 2"/>
    <property type="match status" value="1"/>
</dbReference>
<dbReference type="Pfam" id="PF00042">
    <property type="entry name" value="Globin"/>
    <property type="match status" value="1"/>
</dbReference>
<dbReference type="PRINTS" id="PR00188">
    <property type="entry name" value="PLANTGLOBIN"/>
</dbReference>
<dbReference type="SUPFAM" id="SSF46458">
    <property type="entry name" value="Globin-like"/>
    <property type="match status" value="1"/>
</dbReference>
<dbReference type="PROSITE" id="PS01033">
    <property type="entry name" value="GLOBIN"/>
    <property type="match status" value="1"/>
</dbReference>
<dbReference type="PROSITE" id="PS00208">
    <property type="entry name" value="PLANT_GLOBIN"/>
    <property type="match status" value="1"/>
</dbReference>
<evidence type="ECO:0000250" key="1">
    <source>
        <dbReference type="UniProtKB" id="A2XE98"/>
    </source>
</evidence>
<evidence type="ECO:0000250" key="2">
    <source>
        <dbReference type="UniProtKB" id="O04986"/>
    </source>
</evidence>
<evidence type="ECO:0000250" key="3">
    <source>
        <dbReference type="UniProtKB" id="P68168"/>
    </source>
</evidence>
<evidence type="ECO:0000250" key="4">
    <source>
        <dbReference type="UniProtKB" id="Q42831"/>
    </source>
</evidence>
<evidence type="ECO:0000255" key="5">
    <source>
        <dbReference type="PROSITE-ProRule" id="PRU00238"/>
    </source>
</evidence>
<evidence type="ECO:0000303" key="6">
    <source>
    </source>
</evidence>
<evidence type="ECO:0000305" key="7"/>
<protein>
    <recommendedName>
        <fullName evidence="2">Anaerobic nitrite reductase HB2</fullName>
        <ecNumber evidence="2">1.7.2.-</ecNumber>
    </recommendedName>
    <alternativeName>
        <fullName evidence="6">BRAna GLB2</fullName>
    </alternativeName>
    <alternativeName>
        <fullName evidence="6">Hb2</fullName>
    </alternativeName>
    <alternativeName>
        <fullName evidence="6">Non-symbiotic hemoglobin 2</fullName>
    </alternativeName>
</protein>
<sequence>MGEIVFTEKQEALVKESWEILKQDIPKYSLHFFSQILEIAPAAKDMFSFLRDTDEVPHNNPKLKAHAVKVFKMTCETAIQLREKGKVVVADTTLQYLGSVHFKSGVLDPHFEVVKEALVRTLKEGLGEKYNEEVEGAWSKAYDHLALAIKAEMKQEDSQKP</sequence>
<gene>
    <name evidence="6" type="primary">HB2</name>
    <name evidence="6" type="synonym">GLB2</name>
</gene>
<proteinExistence type="inferred from homology"/>